<dbReference type="EMBL" id="CP000681">
    <property type="protein sequence ID" value="ABP77442.1"/>
    <property type="molecule type" value="Genomic_DNA"/>
</dbReference>
<dbReference type="SMR" id="A4YBV9"/>
<dbReference type="STRING" id="319224.Sputcn32_3735"/>
<dbReference type="KEGG" id="spc:Sputcn32_3735"/>
<dbReference type="eggNOG" id="COG0522">
    <property type="taxonomic scope" value="Bacteria"/>
</dbReference>
<dbReference type="HOGENOM" id="CLU_092403_0_2_6"/>
<dbReference type="GO" id="GO:0015935">
    <property type="term" value="C:small ribosomal subunit"/>
    <property type="evidence" value="ECO:0007669"/>
    <property type="project" value="InterPro"/>
</dbReference>
<dbReference type="GO" id="GO:0019843">
    <property type="term" value="F:rRNA binding"/>
    <property type="evidence" value="ECO:0007669"/>
    <property type="project" value="UniProtKB-UniRule"/>
</dbReference>
<dbReference type="GO" id="GO:0003735">
    <property type="term" value="F:structural constituent of ribosome"/>
    <property type="evidence" value="ECO:0007669"/>
    <property type="project" value="InterPro"/>
</dbReference>
<dbReference type="GO" id="GO:0042274">
    <property type="term" value="P:ribosomal small subunit biogenesis"/>
    <property type="evidence" value="ECO:0007669"/>
    <property type="project" value="TreeGrafter"/>
</dbReference>
<dbReference type="GO" id="GO:0006412">
    <property type="term" value="P:translation"/>
    <property type="evidence" value="ECO:0007669"/>
    <property type="project" value="UniProtKB-UniRule"/>
</dbReference>
<dbReference type="CDD" id="cd00165">
    <property type="entry name" value="S4"/>
    <property type="match status" value="1"/>
</dbReference>
<dbReference type="FunFam" id="1.10.1050.10:FF:000001">
    <property type="entry name" value="30S ribosomal protein S4"/>
    <property type="match status" value="1"/>
</dbReference>
<dbReference type="FunFam" id="3.10.290.10:FF:000001">
    <property type="entry name" value="30S ribosomal protein S4"/>
    <property type="match status" value="1"/>
</dbReference>
<dbReference type="Gene3D" id="1.10.1050.10">
    <property type="entry name" value="Ribosomal Protein S4 Delta 41, Chain A, domain 1"/>
    <property type="match status" value="1"/>
</dbReference>
<dbReference type="Gene3D" id="3.10.290.10">
    <property type="entry name" value="RNA-binding S4 domain"/>
    <property type="match status" value="1"/>
</dbReference>
<dbReference type="HAMAP" id="MF_01306_B">
    <property type="entry name" value="Ribosomal_uS4_B"/>
    <property type="match status" value="1"/>
</dbReference>
<dbReference type="InterPro" id="IPR022801">
    <property type="entry name" value="Ribosomal_uS4"/>
</dbReference>
<dbReference type="InterPro" id="IPR005709">
    <property type="entry name" value="Ribosomal_uS4_bac-type"/>
</dbReference>
<dbReference type="InterPro" id="IPR018079">
    <property type="entry name" value="Ribosomal_uS4_CS"/>
</dbReference>
<dbReference type="InterPro" id="IPR001912">
    <property type="entry name" value="Ribosomal_uS4_N"/>
</dbReference>
<dbReference type="InterPro" id="IPR002942">
    <property type="entry name" value="S4_RNA-bd"/>
</dbReference>
<dbReference type="InterPro" id="IPR036986">
    <property type="entry name" value="S4_RNA-bd_sf"/>
</dbReference>
<dbReference type="NCBIfam" id="NF003717">
    <property type="entry name" value="PRK05327.1"/>
    <property type="match status" value="1"/>
</dbReference>
<dbReference type="NCBIfam" id="TIGR01017">
    <property type="entry name" value="rpsD_bact"/>
    <property type="match status" value="1"/>
</dbReference>
<dbReference type="PANTHER" id="PTHR11831">
    <property type="entry name" value="30S 40S RIBOSOMAL PROTEIN"/>
    <property type="match status" value="1"/>
</dbReference>
<dbReference type="PANTHER" id="PTHR11831:SF4">
    <property type="entry name" value="SMALL RIBOSOMAL SUBUNIT PROTEIN US4M"/>
    <property type="match status" value="1"/>
</dbReference>
<dbReference type="Pfam" id="PF00163">
    <property type="entry name" value="Ribosomal_S4"/>
    <property type="match status" value="1"/>
</dbReference>
<dbReference type="Pfam" id="PF01479">
    <property type="entry name" value="S4"/>
    <property type="match status" value="1"/>
</dbReference>
<dbReference type="SMART" id="SM01390">
    <property type="entry name" value="Ribosomal_S4"/>
    <property type="match status" value="1"/>
</dbReference>
<dbReference type="SMART" id="SM00363">
    <property type="entry name" value="S4"/>
    <property type="match status" value="1"/>
</dbReference>
<dbReference type="SUPFAM" id="SSF55174">
    <property type="entry name" value="Alpha-L RNA-binding motif"/>
    <property type="match status" value="1"/>
</dbReference>
<dbReference type="PROSITE" id="PS00632">
    <property type="entry name" value="RIBOSOMAL_S4"/>
    <property type="match status" value="1"/>
</dbReference>
<dbReference type="PROSITE" id="PS50889">
    <property type="entry name" value="S4"/>
    <property type="match status" value="1"/>
</dbReference>
<feature type="chain" id="PRO_0000322334" description="Small ribosomal subunit protein uS4">
    <location>
        <begin position="1"/>
        <end position="206"/>
    </location>
</feature>
<feature type="domain" description="S4 RNA-binding" evidence="1">
    <location>
        <begin position="96"/>
        <end position="156"/>
    </location>
</feature>
<accession>A4YBV9</accession>
<protein>
    <recommendedName>
        <fullName evidence="1">Small ribosomal subunit protein uS4</fullName>
    </recommendedName>
    <alternativeName>
        <fullName evidence="2">30S ribosomal protein S4</fullName>
    </alternativeName>
</protein>
<name>RS4_SHEPC</name>
<reference key="1">
    <citation type="submission" date="2007-04" db="EMBL/GenBank/DDBJ databases">
        <title>Complete sequence of Shewanella putrefaciens CN-32.</title>
        <authorList>
            <consortium name="US DOE Joint Genome Institute"/>
            <person name="Copeland A."/>
            <person name="Lucas S."/>
            <person name="Lapidus A."/>
            <person name="Barry K."/>
            <person name="Detter J.C."/>
            <person name="Glavina del Rio T."/>
            <person name="Hammon N."/>
            <person name="Israni S."/>
            <person name="Dalin E."/>
            <person name="Tice H."/>
            <person name="Pitluck S."/>
            <person name="Chain P."/>
            <person name="Malfatti S."/>
            <person name="Shin M."/>
            <person name="Vergez L."/>
            <person name="Schmutz J."/>
            <person name="Larimer F."/>
            <person name="Land M."/>
            <person name="Hauser L."/>
            <person name="Kyrpides N."/>
            <person name="Mikhailova N."/>
            <person name="Romine M.F."/>
            <person name="Fredrickson J."/>
            <person name="Tiedje J."/>
            <person name="Richardson P."/>
        </authorList>
    </citation>
    <scope>NUCLEOTIDE SEQUENCE [LARGE SCALE GENOMIC DNA]</scope>
    <source>
        <strain>CN-32 / ATCC BAA-453</strain>
    </source>
</reference>
<gene>
    <name evidence="1" type="primary">rpsD</name>
    <name type="ordered locus">Sputcn32_3735</name>
</gene>
<sequence length="206" mass="23410">MARYLGPKLKLSRREGTDLFLKSGVRAIDSKCKLETAPGQHGARKPRLSEYGTQLREKQKVRRIYGVLEKQFRNYYKDAARLKGNTGENLLQLLETRLDNVVYRMGFGATRAESRQLVSHKSVMVNGRVVNIPSFKVSANDVVSIREKSRTQARIKAALEVAAQREKPTWVEVDSAKMEGAFKRVPERSDLSAEINEQLIVELYSK</sequence>
<keyword id="KW-0687">Ribonucleoprotein</keyword>
<keyword id="KW-0689">Ribosomal protein</keyword>
<keyword id="KW-0694">RNA-binding</keyword>
<keyword id="KW-0699">rRNA-binding</keyword>
<comment type="function">
    <text evidence="1">One of the primary rRNA binding proteins, it binds directly to 16S rRNA where it nucleates assembly of the body of the 30S subunit.</text>
</comment>
<comment type="function">
    <text evidence="1">With S5 and S12 plays an important role in translational accuracy.</text>
</comment>
<comment type="subunit">
    <text evidence="1">Part of the 30S ribosomal subunit. Contacts protein S5. The interaction surface between S4 and S5 is involved in control of translational fidelity.</text>
</comment>
<comment type="similarity">
    <text evidence="1">Belongs to the universal ribosomal protein uS4 family.</text>
</comment>
<organism>
    <name type="scientific">Shewanella putrefaciens (strain CN-32 / ATCC BAA-453)</name>
    <dbReference type="NCBI Taxonomy" id="319224"/>
    <lineage>
        <taxon>Bacteria</taxon>
        <taxon>Pseudomonadati</taxon>
        <taxon>Pseudomonadota</taxon>
        <taxon>Gammaproteobacteria</taxon>
        <taxon>Alteromonadales</taxon>
        <taxon>Shewanellaceae</taxon>
        <taxon>Shewanella</taxon>
    </lineage>
</organism>
<proteinExistence type="inferred from homology"/>
<evidence type="ECO:0000255" key="1">
    <source>
        <dbReference type="HAMAP-Rule" id="MF_01306"/>
    </source>
</evidence>
<evidence type="ECO:0000305" key="2"/>